<evidence type="ECO:0000255" key="1">
    <source>
        <dbReference type="HAMAP-Rule" id="MF_02106"/>
    </source>
</evidence>
<evidence type="ECO:0000256" key="2">
    <source>
        <dbReference type="SAM" id="MobiDB-lite"/>
    </source>
</evidence>
<protein>
    <recommendedName>
        <fullName evidence="1">Prokaryotic ubiquitin-like protein Pup</fullName>
    </recommendedName>
    <alternativeName>
        <fullName evidence="1">Bacterial ubiquitin-like modifier</fullName>
    </alternativeName>
</protein>
<comment type="function">
    <text evidence="1">Protein modifier that is covalently attached to lysine residues of substrate proteins, thereby targeting them for proteasomal degradation. The tagging system is termed pupylation.</text>
</comment>
<comment type="pathway">
    <text evidence="1">Protein degradation; proteasomal Pup-dependent pathway.</text>
</comment>
<comment type="subunit">
    <text evidence="1">Strongly interacts with the proteasome-associated ATPase ARC through a hydrophobic interface; the interacting region of Pup lies in its C-terminal half. There is one Pup binding site per ARC hexamer ring.</text>
</comment>
<comment type="domain">
    <text evidence="1">The N-terminal unstructured half of Pup provides a signal required to initiate unfolding and degradation by the proteasome but is not needed for pupylation, while the C-terminal helical half of Pup interacts with ARC to target proteins to the proteasome.</text>
</comment>
<comment type="similarity">
    <text evidence="1">Belongs to the prokaryotic ubiquitin-like protein family.</text>
</comment>
<dbReference type="EMBL" id="CP001095">
    <property type="protein sequence ID" value="ACJ53186.1"/>
    <property type="molecule type" value="Genomic_DNA"/>
</dbReference>
<dbReference type="EMBL" id="AP010889">
    <property type="protein sequence ID" value="BAJ69779.1"/>
    <property type="molecule type" value="Genomic_DNA"/>
</dbReference>
<dbReference type="RefSeq" id="WP_012578390.1">
    <property type="nucleotide sequence ID" value="NC_011593.1"/>
</dbReference>
<dbReference type="SMR" id="B7GUP0"/>
<dbReference type="KEGG" id="bln:Blon_2125"/>
<dbReference type="KEGG" id="blon:BLIJ_2202"/>
<dbReference type="PATRIC" id="fig|391904.8.peg.2204"/>
<dbReference type="HOGENOM" id="CLU_183816_0_0_11"/>
<dbReference type="UniPathway" id="UPA00997"/>
<dbReference type="Proteomes" id="UP000001360">
    <property type="component" value="Chromosome"/>
</dbReference>
<dbReference type="GO" id="GO:0070628">
    <property type="term" value="F:proteasome binding"/>
    <property type="evidence" value="ECO:0007669"/>
    <property type="project" value="UniProtKB-UniRule"/>
</dbReference>
<dbReference type="GO" id="GO:0031386">
    <property type="term" value="F:protein tag activity"/>
    <property type="evidence" value="ECO:0007669"/>
    <property type="project" value="UniProtKB-UniRule"/>
</dbReference>
<dbReference type="GO" id="GO:0019941">
    <property type="term" value="P:modification-dependent protein catabolic process"/>
    <property type="evidence" value="ECO:0007669"/>
    <property type="project" value="UniProtKB-UniRule"/>
</dbReference>
<dbReference type="GO" id="GO:0010498">
    <property type="term" value="P:proteasomal protein catabolic process"/>
    <property type="evidence" value="ECO:0007669"/>
    <property type="project" value="UniProtKB-UniRule"/>
</dbReference>
<dbReference type="GO" id="GO:0070490">
    <property type="term" value="P:protein pupylation"/>
    <property type="evidence" value="ECO:0007669"/>
    <property type="project" value="UniProtKB-UniRule"/>
</dbReference>
<dbReference type="HAMAP" id="MF_02106">
    <property type="entry name" value="Pup"/>
    <property type="match status" value="1"/>
</dbReference>
<dbReference type="InterPro" id="IPR008515">
    <property type="entry name" value="Ubiquitin-like_Pup"/>
</dbReference>
<dbReference type="NCBIfam" id="TIGR03687">
    <property type="entry name" value="pupylate_cterm"/>
    <property type="match status" value="1"/>
</dbReference>
<dbReference type="Pfam" id="PF05639">
    <property type="entry name" value="Pup"/>
    <property type="match status" value="1"/>
</dbReference>
<accession>B7GUP0</accession>
<accession>E8MMK2</accession>
<keyword id="KW-1017">Isopeptide bond</keyword>
<keyword id="KW-0833">Ubl conjugation pathway</keyword>
<name>PUP_BIFLS</name>
<proteinExistence type="inferred from homology"/>
<organism>
    <name type="scientific">Bifidobacterium longum subsp. infantis (strain ATCC 15697 / DSM 20088 / JCM 1222 / NCTC 11817 / S12)</name>
    <dbReference type="NCBI Taxonomy" id="391904"/>
    <lineage>
        <taxon>Bacteria</taxon>
        <taxon>Bacillati</taxon>
        <taxon>Actinomycetota</taxon>
        <taxon>Actinomycetes</taxon>
        <taxon>Bifidobacteriales</taxon>
        <taxon>Bifidobacteriaceae</taxon>
        <taxon>Bifidobacterium</taxon>
    </lineage>
</organism>
<sequence>MPQQFEQPQAQQAVTQEDDALATTQAATQTESTDQADVLDDILDDIESTLETNAEEYVNSFVQKGGE</sequence>
<feature type="chain" id="PRO_0000390572" description="Prokaryotic ubiquitin-like protein Pup">
    <location>
        <begin position="1"/>
        <end position="67"/>
    </location>
</feature>
<feature type="region of interest" description="Disordered" evidence="2">
    <location>
        <begin position="1"/>
        <end position="38"/>
    </location>
</feature>
<feature type="region of interest" description="ARC ATPase binding" evidence="1">
    <location>
        <begin position="23"/>
        <end position="61"/>
    </location>
</feature>
<feature type="compositionally biased region" description="Low complexity" evidence="2">
    <location>
        <begin position="1"/>
        <end position="36"/>
    </location>
</feature>
<feature type="cross-link" description="Isoglutamyl lysine isopeptide (Glu-Lys) (interchain with K-? in acceptor proteins)" evidence="1">
    <location>
        <position position="67"/>
    </location>
</feature>
<reference key="1">
    <citation type="journal article" date="2008" name="Proc. Natl. Acad. Sci. U.S.A.">
        <title>The genome sequence of Bifidobacterium longum subsp. infantis reveals adaptations for milk utilization within the infant microbiome.</title>
        <authorList>
            <person name="Sela D.A."/>
            <person name="Chapman J."/>
            <person name="Adeuya A."/>
            <person name="Kim J.H."/>
            <person name="Chen F."/>
            <person name="Whitehead T.R."/>
            <person name="Lapidus A."/>
            <person name="Rokhsar D.S."/>
            <person name="Lebrilla C.B."/>
            <person name="German J.B."/>
            <person name="Price N.P."/>
            <person name="Richardson P.M."/>
            <person name="Mills D.A."/>
        </authorList>
    </citation>
    <scope>NUCLEOTIDE SEQUENCE [LARGE SCALE GENOMIC DNA]</scope>
    <source>
        <strain>ATCC 15697 / DSM 20088 / JCM 1222 / NCTC 11817 / S12</strain>
    </source>
</reference>
<reference key="2">
    <citation type="journal article" date="2011" name="Nature">
        <title>Bifidobacteria can protect from enteropathogenic infection through production of acetate.</title>
        <authorList>
            <person name="Fukuda S."/>
            <person name="Toh H."/>
            <person name="Hase K."/>
            <person name="Oshima K."/>
            <person name="Nakanishi Y."/>
            <person name="Yoshimura K."/>
            <person name="Tobe T."/>
            <person name="Clarke J.M."/>
            <person name="Topping D.L."/>
            <person name="Suzuki T."/>
            <person name="Taylor T.D."/>
            <person name="Itoh K."/>
            <person name="Kikuchi J."/>
            <person name="Morita H."/>
            <person name="Hattori M."/>
            <person name="Ohno H."/>
        </authorList>
    </citation>
    <scope>NUCLEOTIDE SEQUENCE [LARGE SCALE GENOMIC DNA]</scope>
    <source>
        <strain>ATCC 15697 / DSM 20088 / JCM 1222 / NCTC 11817 / S12</strain>
    </source>
</reference>
<gene>
    <name evidence="1" type="primary">pup</name>
    <name type="ordered locus">Blon_2125</name>
    <name type="ordered locus">BLIJ_2202</name>
</gene>